<protein>
    <recommendedName>
        <fullName evidence="1">Lipoyl synthase</fullName>
        <ecNumber evidence="1">2.8.1.8</ecNumber>
    </recommendedName>
    <alternativeName>
        <fullName evidence="1">Lip-syn</fullName>
        <shortName evidence="1">LS</shortName>
    </alternativeName>
    <alternativeName>
        <fullName evidence="1">Lipoate synthase</fullName>
    </alternativeName>
    <alternativeName>
        <fullName evidence="1">Lipoic acid synthase</fullName>
    </alternativeName>
    <alternativeName>
        <fullName evidence="1">Sulfur insertion protein LipA</fullName>
    </alternativeName>
</protein>
<reference key="1">
    <citation type="journal article" date="2007" name="Genome Res.">
        <title>Reductive evolution and niche adaptation inferred from the genome of Mycobacterium ulcerans, the causative agent of Buruli ulcer.</title>
        <authorList>
            <person name="Stinear T.P."/>
            <person name="Seemann T."/>
            <person name="Pidot S."/>
            <person name="Frigui W."/>
            <person name="Reysset G."/>
            <person name="Garnier T."/>
            <person name="Meurice G."/>
            <person name="Simon D."/>
            <person name="Bouchier C."/>
            <person name="Ma L."/>
            <person name="Tichit M."/>
            <person name="Porter J.L."/>
            <person name="Ryan J."/>
            <person name="Johnson P.D.R."/>
            <person name="Davies J.K."/>
            <person name="Jenkin G.A."/>
            <person name="Small P.L.C."/>
            <person name="Jones L.M."/>
            <person name="Tekaia F."/>
            <person name="Laval F."/>
            <person name="Daffe M."/>
            <person name="Parkhill J."/>
            <person name="Cole S.T."/>
        </authorList>
    </citation>
    <scope>NUCLEOTIDE SEQUENCE [LARGE SCALE GENOMIC DNA]</scope>
    <source>
        <strain>Agy99</strain>
    </source>
</reference>
<feature type="chain" id="PRO_1000012240" description="Lipoyl synthase">
    <location>
        <begin position="1"/>
        <end position="324"/>
    </location>
</feature>
<feature type="domain" description="Radical SAM core" evidence="2">
    <location>
        <begin position="77"/>
        <end position="291"/>
    </location>
</feature>
<feature type="binding site" evidence="1">
    <location>
        <position position="65"/>
    </location>
    <ligand>
        <name>[4Fe-4S] cluster</name>
        <dbReference type="ChEBI" id="CHEBI:49883"/>
        <label>1</label>
    </ligand>
</feature>
<feature type="binding site" evidence="1">
    <location>
        <position position="70"/>
    </location>
    <ligand>
        <name>[4Fe-4S] cluster</name>
        <dbReference type="ChEBI" id="CHEBI:49883"/>
        <label>1</label>
    </ligand>
</feature>
<feature type="binding site" evidence="1">
    <location>
        <position position="76"/>
    </location>
    <ligand>
        <name>[4Fe-4S] cluster</name>
        <dbReference type="ChEBI" id="CHEBI:49883"/>
        <label>1</label>
    </ligand>
</feature>
<feature type="binding site" evidence="1">
    <location>
        <position position="91"/>
    </location>
    <ligand>
        <name>[4Fe-4S] cluster</name>
        <dbReference type="ChEBI" id="CHEBI:49883"/>
        <label>2</label>
        <note>4Fe-4S-S-AdoMet</note>
    </ligand>
</feature>
<feature type="binding site" evidence="1">
    <location>
        <position position="95"/>
    </location>
    <ligand>
        <name>[4Fe-4S] cluster</name>
        <dbReference type="ChEBI" id="CHEBI:49883"/>
        <label>2</label>
        <note>4Fe-4S-S-AdoMet</note>
    </ligand>
</feature>
<feature type="binding site" evidence="1">
    <location>
        <position position="98"/>
    </location>
    <ligand>
        <name>[4Fe-4S] cluster</name>
        <dbReference type="ChEBI" id="CHEBI:49883"/>
        <label>2</label>
        <note>4Fe-4S-S-AdoMet</note>
    </ligand>
</feature>
<feature type="binding site" evidence="1">
    <location>
        <position position="302"/>
    </location>
    <ligand>
        <name>[4Fe-4S] cluster</name>
        <dbReference type="ChEBI" id="CHEBI:49883"/>
        <label>1</label>
    </ligand>
</feature>
<name>LIPA_MYCUA</name>
<sequence>MNVAPEPGAAGAAAPQGRKLLRLEVRNAQTPIERKPPWIRTRARMGPEYTELKNLVRREGLHTVCEEAGCPNIFECWEDREATFLIGGDQCTRRCDFCQIDTGKPAPLDRDEPRRVAESVHTMGLRYATVTGVARDDLPDGGAWLYAETVRAIKELNPSTGVELLIPDFNGKADQLGEVFEARPEVLAHNVETVPRVFKRIRPAFTYQRSLDVLTAARQFGLVTKSNLILGMGETPEEVRTALVDLHDAGCDIITITQYLRPSPRHHPVERWVRPEEFVEFAQYAEGLGFAGVLAGPLVRSSYRAGRLYEQARSRNTSGASNSG</sequence>
<dbReference type="EC" id="2.8.1.8" evidence="1"/>
<dbReference type="EMBL" id="CP000325">
    <property type="protein sequence ID" value="ABL03896.1"/>
    <property type="molecule type" value="Genomic_DNA"/>
</dbReference>
<dbReference type="RefSeq" id="WP_011739517.1">
    <property type="nucleotide sequence ID" value="NC_008611.1"/>
</dbReference>
<dbReference type="SMR" id="A0PNH7"/>
<dbReference type="KEGG" id="mul:MUL_1343"/>
<dbReference type="eggNOG" id="COG0320">
    <property type="taxonomic scope" value="Bacteria"/>
</dbReference>
<dbReference type="HOGENOM" id="CLU_033144_2_1_11"/>
<dbReference type="UniPathway" id="UPA00538">
    <property type="reaction ID" value="UER00593"/>
</dbReference>
<dbReference type="Proteomes" id="UP000000765">
    <property type="component" value="Chromosome"/>
</dbReference>
<dbReference type="GO" id="GO:0005737">
    <property type="term" value="C:cytoplasm"/>
    <property type="evidence" value="ECO:0007669"/>
    <property type="project" value="UniProtKB-SubCell"/>
</dbReference>
<dbReference type="GO" id="GO:0051539">
    <property type="term" value="F:4 iron, 4 sulfur cluster binding"/>
    <property type="evidence" value="ECO:0007669"/>
    <property type="project" value="UniProtKB-UniRule"/>
</dbReference>
<dbReference type="GO" id="GO:0016992">
    <property type="term" value="F:lipoate synthase activity"/>
    <property type="evidence" value="ECO:0007669"/>
    <property type="project" value="UniProtKB-UniRule"/>
</dbReference>
<dbReference type="GO" id="GO:0046872">
    <property type="term" value="F:metal ion binding"/>
    <property type="evidence" value="ECO:0007669"/>
    <property type="project" value="UniProtKB-KW"/>
</dbReference>
<dbReference type="CDD" id="cd01335">
    <property type="entry name" value="Radical_SAM"/>
    <property type="match status" value="1"/>
</dbReference>
<dbReference type="FunFam" id="3.20.20.70:FF:000116">
    <property type="entry name" value="Lipoyl synthase"/>
    <property type="match status" value="1"/>
</dbReference>
<dbReference type="Gene3D" id="3.20.20.70">
    <property type="entry name" value="Aldolase class I"/>
    <property type="match status" value="1"/>
</dbReference>
<dbReference type="HAMAP" id="MF_00206">
    <property type="entry name" value="Lipoyl_synth"/>
    <property type="match status" value="1"/>
</dbReference>
<dbReference type="InterPro" id="IPR013785">
    <property type="entry name" value="Aldolase_TIM"/>
</dbReference>
<dbReference type="InterPro" id="IPR006638">
    <property type="entry name" value="Elp3/MiaA/NifB-like_rSAM"/>
</dbReference>
<dbReference type="InterPro" id="IPR031691">
    <property type="entry name" value="LIAS_N"/>
</dbReference>
<dbReference type="InterPro" id="IPR003698">
    <property type="entry name" value="Lipoyl_synth"/>
</dbReference>
<dbReference type="InterPro" id="IPR007197">
    <property type="entry name" value="rSAM"/>
</dbReference>
<dbReference type="NCBIfam" id="TIGR00510">
    <property type="entry name" value="lipA"/>
    <property type="match status" value="1"/>
</dbReference>
<dbReference type="NCBIfam" id="NF004019">
    <property type="entry name" value="PRK05481.1"/>
    <property type="match status" value="1"/>
</dbReference>
<dbReference type="NCBIfam" id="NF009544">
    <property type="entry name" value="PRK12928.1"/>
    <property type="match status" value="1"/>
</dbReference>
<dbReference type="PANTHER" id="PTHR10949">
    <property type="entry name" value="LIPOYL SYNTHASE"/>
    <property type="match status" value="1"/>
</dbReference>
<dbReference type="PANTHER" id="PTHR10949:SF0">
    <property type="entry name" value="LIPOYL SYNTHASE, MITOCHONDRIAL"/>
    <property type="match status" value="1"/>
</dbReference>
<dbReference type="Pfam" id="PF16881">
    <property type="entry name" value="LIAS_N"/>
    <property type="match status" value="1"/>
</dbReference>
<dbReference type="Pfam" id="PF04055">
    <property type="entry name" value="Radical_SAM"/>
    <property type="match status" value="1"/>
</dbReference>
<dbReference type="PIRSF" id="PIRSF005963">
    <property type="entry name" value="Lipoyl_synth"/>
    <property type="match status" value="1"/>
</dbReference>
<dbReference type="SFLD" id="SFLDF00271">
    <property type="entry name" value="lipoyl_synthase"/>
    <property type="match status" value="1"/>
</dbReference>
<dbReference type="SFLD" id="SFLDG01058">
    <property type="entry name" value="lipoyl_synthase_like"/>
    <property type="match status" value="1"/>
</dbReference>
<dbReference type="SMART" id="SM00729">
    <property type="entry name" value="Elp3"/>
    <property type="match status" value="1"/>
</dbReference>
<dbReference type="SUPFAM" id="SSF102114">
    <property type="entry name" value="Radical SAM enzymes"/>
    <property type="match status" value="1"/>
</dbReference>
<dbReference type="PROSITE" id="PS51918">
    <property type="entry name" value="RADICAL_SAM"/>
    <property type="match status" value="1"/>
</dbReference>
<proteinExistence type="inferred from homology"/>
<accession>A0PNH7</accession>
<organism>
    <name type="scientific">Mycobacterium ulcerans (strain Agy99)</name>
    <dbReference type="NCBI Taxonomy" id="362242"/>
    <lineage>
        <taxon>Bacteria</taxon>
        <taxon>Bacillati</taxon>
        <taxon>Actinomycetota</taxon>
        <taxon>Actinomycetes</taxon>
        <taxon>Mycobacteriales</taxon>
        <taxon>Mycobacteriaceae</taxon>
        <taxon>Mycobacterium</taxon>
        <taxon>Mycobacterium ulcerans group</taxon>
    </lineage>
</organism>
<comment type="function">
    <text evidence="1">Catalyzes the radical-mediated insertion of two sulfur atoms into the C-6 and C-8 positions of the octanoyl moiety bound to the lipoyl domains of lipoate-dependent enzymes, thereby converting the octanoylated domains into lipoylated derivatives.</text>
</comment>
<comment type="catalytic activity">
    <reaction evidence="1">
        <text>[[Fe-S] cluster scaffold protein carrying a second [4Fe-4S](2+) cluster] + N(6)-octanoyl-L-lysyl-[protein] + 2 oxidized [2Fe-2S]-[ferredoxin] + 2 S-adenosyl-L-methionine + 4 H(+) = [[Fe-S] cluster scaffold protein] + N(6)-[(R)-dihydrolipoyl]-L-lysyl-[protein] + 4 Fe(3+) + 2 hydrogen sulfide + 2 5'-deoxyadenosine + 2 L-methionine + 2 reduced [2Fe-2S]-[ferredoxin]</text>
        <dbReference type="Rhea" id="RHEA:16585"/>
        <dbReference type="Rhea" id="RHEA-COMP:9928"/>
        <dbReference type="Rhea" id="RHEA-COMP:10000"/>
        <dbReference type="Rhea" id="RHEA-COMP:10001"/>
        <dbReference type="Rhea" id="RHEA-COMP:10475"/>
        <dbReference type="Rhea" id="RHEA-COMP:14568"/>
        <dbReference type="Rhea" id="RHEA-COMP:14569"/>
        <dbReference type="ChEBI" id="CHEBI:15378"/>
        <dbReference type="ChEBI" id="CHEBI:17319"/>
        <dbReference type="ChEBI" id="CHEBI:29034"/>
        <dbReference type="ChEBI" id="CHEBI:29919"/>
        <dbReference type="ChEBI" id="CHEBI:33722"/>
        <dbReference type="ChEBI" id="CHEBI:33737"/>
        <dbReference type="ChEBI" id="CHEBI:33738"/>
        <dbReference type="ChEBI" id="CHEBI:57844"/>
        <dbReference type="ChEBI" id="CHEBI:59789"/>
        <dbReference type="ChEBI" id="CHEBI:78809"/>
        <dbReference type="ChEBI" id="CHEBI:83100"/>
        <dbReference type="EC" id="2.8.1.8"/>
    </reaction>
</comment>
<comment type="cofactor">
    <cofactor evidence="1">
        <name>[4Fe-4S] cluster</name>
        <dbReference type="ChEBI" id="CHEBI:49883"/>
    </cofactor>
    <text evidence="1">Binds 2 [4Fe-4S] clusters per subunit. One cluster is coordinated with 3 cysteines and an exchangeable S-adenosyl-L-methionine.</text>
</comment>
<comment type="pathway">
    <text evidence="1">Protein modification; protein lipoylation via endogenous pathway; protein N(6)-(lipoyl)lysine from octanoyl-[acyl-carrier-protein]: step 2/2.</text>
</comment>
<comment type="subcellular location">
    <subcellularLocation>
        <location evidence="1">Cytoplasm</location>
    </subcellularLocation>
</comment>
<comment type="similarity">
    <text evidence="1">Belongs to the radical SAM superfamily. Lipoyl synthase family.</text>
</comment>
<gene>
    <name evidence="1" type="primary">lipA</name>
    <name type="ordered locus">MUL_1343</name>
</gene>
<keyword id="KW-0004">4Fe-4S</keyword>
<keyword id="KW-0963">Cytoplasm</keyword>
<keyword id="KW-0408">Iron</keyword>
<keyword id="KW-0411">Iron-sulfur</keyword>
<keyword id="KW-0479">Metal-binding</keyword>
<keyword id="KW-0949">S-adenosyl-L-methionine</keyword>
<keyword id="KW-0808">Transferase</keyword>
<evidence type="ECO:0000255" key="1">
    <source>
        <dbReference type="HAMAP-Rule" id="MF_00206"/>
    </source>
</evidence>
<evidence type="ECO:0000255" key="2">
    <source>
        <dbReference type="PROSITE-ProRule" id="PRU01266"/>
    </source>
</evidence>